<comment type="function">
    <text evidence="1">Small subunit of the glutamine-dependent carbamoyl phosphate synthetase (CPSase). CPSase catalyzes the formation of carbamoyl phosphate from the ammonia moiety of glutamine, carbonate, and phosphate donated by ATP, constituting the first step of 2 biosynthetic pathways, one leading to arginine and/or urea and the other to pyrimidine nucleotides. The small subunit (glutamine amidotransferase) binds and cleaves glutamine to supply the large subunit with the substrate ammonia.</text>
</comment>
<comment type="catalytic activity">
    <reaction evidence="1">
        <text>hydrogencarbonate + L-glutamine + 2 ATP + H2O = carbamoyl phosphate + L-glutamate + 2 ADP + phosphate + 2 H(+)</text>
        <dbReference type="Rhea" id="RHEA:18633"/>
        <dbReference type="ChEBI" id="CHEBI:15377"/>
        <dbReference type="ChEBI" id="CHEBI:15378"/>
        <dbReference type="ChEBI" id="CHEBI:17544"/>
        <dbReference type="ChEBI" id="CHEBI:29985"/>
        <dbReference type="ChEBI" id="CHEBI:30616"/>
        <dbReference type="ChEBI" id="CHEBI:43474"/>
        <dbReference type="ChEBI" id="CHEBI:58228"/>
        <dbReference type="ChEBI" id="CHEBI:58359"/>
        <dbReference type="ChEBI" id="CHEBI:456216"/>
        <dbReference type="EC" id="6.3.5.5"/>
    </reaction>
</comment>
<comment type="catalytic activity">
    <molecule>Carbamoyl phosphate synthase small chain</molecule>
    <reaction evidence="1">
        <text>L-glutamine + H2O = L-glutamate + NH4(+)</text>
        <dbReference type="Rhea" id="RHEA:15889"/>
        <dbReference type="ChEBI" id="CHEBI:15377"/>
        <dbReference type="ChEBI" id="CHEBI:28938"/>
        <dbReference type="ChEBI" id="CHEBI:29985"/>
        <dbReference type="ChEBI" id="CHEBI:58359"/>
    </reaction>
</comment>
<comment type="pathway">
    <text evidence="1">Amino-acid biosynthesis; L-arginine biosynthesis; carbamoyl phosphate from bicarbonate: step 1/1.</text>
</comment>
<comment type="pathway">
    <text evidence="1">Pyrimidine metabolism; UMP biosynthesis via de novo pathway; (S)-dihydroorotate from bicarbonate: step 1/3.</text>
</comment>
<comment type="subunit">
    <text evidence="1">Composed of two chains; the small (or glutamine) chain promotes the hydrolysis of glutamine to ammonia, which is used by the large (or ammonia) chain to synthesize carbamoyl phosphate. Tetramer of heterodimers (alpha,beta)4.</text>
</comment>
<comment type="similarity">
    <text evidence="1">Belongs to the CarA family.</text>
</comment>
<keyword id="KW-0028">Amino-acid biosynthesis</keyword>
<keyword id="KW-0055">Arginine biosynthesis</keyword>
<keyword id="KW-0067">ATP-binding</keyword>
<keyword id="KW-0315">Glutamine amidotransferase</keyword>
<keyword id="KW-0436">Ligase</keyword>
<keyword id="KW-0547">Nucleotide-binding</keyword>
<keyword id="KW-0665">Pyrimidine biosynthesis</keyword>
<keyword id="KW-1185">Reference proteome</keyword>
<protein>
    <recommendedName>
        <fullName evidence="1">Carbamoyl phosphate synthase small chain</fullName>
        <ecNumber evidence="1">6.3.5.5</ecNumber>
    </recommendedName>
    <alternativeName>
        <fullName evidence="1">Carbamoyl phosphate synthetase glutamine chain</fullName>
    </alternativeName>
</protein>
<accession>Q970U8</accession>
<organism>
    <name type="scientific">Sulfurisphaera tokodaii (strain DSM 16993 / JCM 10545 / NBRC 100140 / 7)</name>
    <name type="common">Sulfolobus tokodaii</name>
    <dbReference type="NCBI Taxonomy" id="273063"/>
    <lineage>
        <taxon>Archaea</taxon>
        <taxon>Thermoproteota</taxon>
        <taxon>Thermoprotei</taxon>
        <taxon>Sulfolobales</taxon>
        <taxon>Sulfolobaceae</taxon>
        <taxon>Sulfurisphaera</taxon>
    </lineage>
</organism>
<proteinExistence type="inferred from homology"/>
<dbReference type="EC" id="6.3.5.5" evidence="1"/>
<dbReference type="EMBL" id="BA000023">
    <property type="protein sequence ID" value="BAB66575.1"/>
    <property type="molecule type" value="Genomic_DNA"/>
</dbReference>
<dbReference type="RefSeq" id="WP_010979553.1">
    <property type="nucleotide sequence ID" value="NC_003106.2"/>
</dbReference>
<dbReference type="SMR" id="Q970U8"/>
<dbReference type="STRING" id="273063.STK_15030"/>
<dbReference type="MEROPS" id="C26.A33"/>
<dbReference type="GeneID" id="1459539"/>
<dbReference type="KEGG" id="sto:STK_15030"/>
<dbReference type="PATRIC" id="fig|273063.9.peg.1711"/>
<dbReference type="eggNOG" id="arCOG00064">
    <property type="taxonomic scope" value="Archaea"/>
</dbReference>
<dbReference type="OrthoDB" id="7675at2157"/>
<dbReference type="UniPathway" id="UPA00068">
    <property type="reaction ID" value="UER00171"/>
</dbReference>
<dbReference type="UniPathway" id="UPA00070">
    <property type="reaction ID" value="UER00115"/>
</dbReference>
<dbReference type="Proteomes" id="UP000001015">
    <property type="component" value="Chromosome"/>
</dbReference>
<dbReference type="GO" id="GO:0005524">
    <property type="term" value="F:ATP binding"/>
    <property type="evidence" value="ECO:0007669"/>
    <property type="project" value="UniProtKB-UniRule"/>
</dbReference>
<dbReference type="GO" id="GO:0004088">
    <property type="term" value="F:carbamoyl-phosphate synthase (glutamine-hydrolyzing) activity"/>
    <property type="evidence" value="ECO:0007669"/>
    <property type="project" value="UniProtKB-UniRule"/>
</dbReference>
<dbReference type="GO" id="GO:0004359">
    <property type="term" value="F:glutaminase activity"/>
    <property type="evidence" value="ECO:0007669"/>
    <property type="project" value="RHEA"/>
</dbReference>
<dbReference type="GO" id="GO:0006207">
    <property type="term" value="P:'de novo' pyrimidine nucleobase biosynthetic process"/>
    <property type="evidence" value="ECO:0007669"/>
    <property type="project" value="InterPro"/>
</dbReference>
<dbReference type="GO" id="GO:0044205">
    <property type="term" value="P:'de novo' UMP biosynthetic process"/>
    <property type="evidence" value="ECO:0007669"/>
    <property type="project" value="UniProtKB-UniRule"/>
</dbReference>
<dbReference type="GO" id="GO:0006541">
    <property type="term" value="P:glutamine metabolic process"/>
    <property type="evidence" value="ECO:0007669"/>
    <property type="project" value="InterPro"/>
</dbReference>
<dbReference type="GO" id="GO:0006526">
    <property type="term" value="P:L-arginine biosynthetic process"/>
    <property type="evidence" value="ECO:0007669"/>
    <property type="project" value="UniProtKB-UniRule"/>
</dbReference>
<dbReference type="CDD" id="cd01744">
    <property type="entry name" value="GATase1_CPSase"/>
    <property type="match status" value="1"/>
</dbReference>
<dbReference type="Gene3D" id="3.40.50.880">
    <property type="match status" value="1"/>
</dbReference>
<dbReference type="Gene3D" id="3.50.30.20">
    <property type="entry name" value="Carbamoyl-phosphate synthase small subunit, N-terminal domain"/>
    <property type="match status" value="1"/>
</dbReference>
<dbReference type="HAMAP" id="MF_01209">
    <property type="entry name" value="CPSase_S_chain"/>
    <property type="match status" value="1"/>
</dbReference>
<dbReference type="InterPro" id="IPR050472">
    <property type="entry name" value="Anth_synth/Amidotransfase"/>
</dbReference>
<dbReference type="InterPro" id="IPR006274">
    <property type="entry name" value="CarbamoylP_synth_ssu"/>
</dbReference>
<dbReference type="InterPro" id="IPR002474">
    <property type="entry name" value="CarbamoylP_synth_ssu_N"/>
</dbReference>
<dbReference type="InterPro" id="IPR036480">
    <property type="entry name" value="CarbP_synth_ssu_N_sf"/>
</dbReference>
<dbReference type="InterPro" id="IPR029062">
    <property type="entry name" value="Class_I_gatase-like"/>
</dbReference>
<dbReference type="InterPro" id="IPR035686">
    <property type="entry name" value="CPSase_GATase1"/>
</dbReference>
<dbReference type="InterPro" id="IPR017926">
    <property type="entry name" value="GATASE"/>
</dbReference>
<dbReference type="NCBIfam" id="TIGR01368">
    <property type="entry name" value="CPSaseIIsmall"/>
    <property type="match status" value="1"/>
</dbReference>
<dbReference type="NCBIfam" id="NF009475">
    <property type="entry name" value="PRK12838.1"/>
    <property type="match status" value="1"/>
</dbReference>
<dbReference type="PANTHER" id="PTHR43418:SF7">
    <property type="entry name" value="CARBAMOYL-PHOSPHATE SYNTHASE SMALL CHAIN"/>
    <property type="match status" value="1"/>
</dbReference>
<dbReference type="PANTHER" id="PTHR43418">
    <property type="entry name" value="MULTIFUNCTIONAL TRYPTOPHAN BIOSYNTHESIS PROTEIN-RELATED"/>
    <property type="match status" value="1"/>
</dbReference>
<dbReference type="Pfam" id="PF00988">
    <property type="entry name" value="CPSase_sm_chain"/>
    <property type="match status" value="1"/>
</dbReference>
<dbReference type="Pfam" id="PF00117">
    <property type="entry name" value="GATase"/>
    <property type="match status" value="1"/>
</dbReference>
<dbReference type="PRINTS" id="PR00099">
    <property type="entry name" value="CPSGATASE"/>
</dbReference>
<dbReference type="PRINTS" id="PR00096">
    <property type="entry name" value="GATASE"/>
</dbReference>
<dbReference type="SMART" id="SM01097">
    <property type="entry name" value="CPSase_sm_chain"/>
    <property type="match status" value="1"/>
</dbReference>
<dbReference type="SUPFAM" id="SSF52021">
    <property type="entry name" value="Carbamoyl phosphate synthetase, small subunit N-terminal domain"/>
    <property type="match status" value="1"/>
</dbReference>
<dbReference type="SUPFAM" id="SSF52317">
    <property type="entry name" value="Class I glutamine amidotransferase-like"/>
    <property type="match status" value="1"/>
</dbReference>
<dbReference type="PROSITE" id="PS51273">
    <property type="entry name" value="GATASE_TYPE_1"/>
    <property type="match status" value="1"/>
</dbReference>
<sequence length="372" mass="41673">MTLYCKRGYKGYLYLEDGTLIEGCGFGAKGIRAGEVVFTTSMNGYPESLTDPSYRGQILVITHPLVGNYGVPEKQRVEGILTNFESEQIQVEGLVVSEETDPFKWNSSKSLHEWLLSEGVPGLSDVDTRSIVKKVRSRGVMMGVIASGYEIEDPKKFLEKKYDEIDFTQFTSPKAPIVHLGNTGETIVVVDCGVKHGILYQLHQRGFTIVRVPCKFNVSKIMDYYPKGVVFGNGPGNPNLLQEVIENFKELTEYKIPILGICLGHQVATLAMGGKVNKMKFGHRAINKPVIDISSNKCYITTHNHGYGILSKEDLPPNSKLWFINPDDGTIEGWIHEKLPIITTQFHPEARPGPWDVTWVFDKFKKMVSRNA</sequence>
<gene>
    <name evidence="1" type="primary">carA</name>
    <name type="ordered locus">STK_15030</name>
</gene>
<reference key="1">
    <citation type="journal article" date="2001" name="DNA Res.">
        <title>Complete genome sequence of an aerobic thermoacidophilic Crenarchaeon, Sulfolobus tokodaii strain7.</title>
        <authorList>
            <person name="Kawarabayasi Y."/>
            <person name="Hino Y."/>
            <person name="Horikawa H."/>
            <person name="Jin-no K."/>
            <person name="Takahashi M."/>
            <person name="Sekine M."/>
            <person name="Baba S."/>
            <person name="Ankai A."/>
            <person name="Kosugi H."/>
            <person name="Hosoyama A."/>
            <person name="Fukui S."/>
            <person name="Nagai Y."/>
            <person name="Nishijima K."/>
            <person name="Otsuka R."/>
            <person name="Nakazawa H."/>
            <person name="Takamiya M."/>
            <person name="Kato Y."/>
            <person name="Yoshizawa T."/>
            <person name="Tanaka T."/>
            <person name="Kudoh Y."/>
            <person name="Yamazaki J."/>
            <person name="Kushida N."/>
            <person name="Oguchi A."/>
            <person name="Aoki K."/>
            <person name="Masuda S."/>
            <person name="Yanagii M."/>
            <person name="Nishimura M."/>
            <person name="Yamagishi A."/>
            <person name="Oshima T."/>
            <person name="Kikuchi H."/>
        </authorList>
    </citation>
    <scope>NUCLEOTIDE SEQUENCE [LARGE SCALE GENOMIC DNA]</scope>
    <source>
        <strain>DSM 16993 / JCM 10545 / NBRC 100140 / 7</strain>
    </source>
</reference>
<feature type="chain" id="PRO_0000112366" description="Carbamoyl phosphate synthase small chain">
    <location>
        <begin position="1"/>
        <end position="372"/>
    </location>
</feature>
<feature type="domain" description="Glutamine amidotransferase type-1" evidence="1">
    <location>
        <begin position="186"/>
        <end position="372"/>
    </location>
</feature>
<feature type="region of interest" description="CPSase" evidence="1">
    <location>
        <begin position="1"/>
        <end position="182"/>
    </location>
</feature>
<feature type="active site" description="Nucleophile" evidence="1">
    <location>
        <position position="262"/>
    </location>
</feature>
<feature type="active site" evidence="1">
    <location>
        <position position="347"/>
    </location>
</feature>
<feature type="active site" evidence="1">
    <location>
        <position position="349"/>
    </location>
</feature>
<feature type="binding site" evidence="1">
    <location>
        <position position="53"/>
    </location>
    <ligand>
        <name>L-glutamine</name>
        <dbReference type="ChEBI" id="CHEBI:58359"/>
    </ligand>
</feature>
<feature type="binding site" evidence="1">
    <location>
        <position position="234"/>
    </location>
    <ligand>
        <name>L-glutamine</name>
        <dbReference type="ChEBI" id="CHEBI:58359"/>
    </ligand>
</feature>
<feature type="binding site" evidence="1">
    <location>
        <position position="236"/>
    </location>
    <ligand>
        <name>L-glutamine</name>
        <dbReference type="ChEBI" id="CHEBI:58359"/>
    </ligand>
</feature>
<feature type="binding site" evidence="1">
    <location>
        <position position="263"/>
    </location>
    <ligand>
        <name>L-glutamine</name>
        <dbReference type="ChEBI" id="CHEBI:58359"/>
    </ligand>
</feature>
<feature type="binding site" evidence="1">
    <location>
        <position position="266"/>
    </location>
    <ligand>
        <name>L-glutamine</name>
        <dbReference type="ChEBI" id="CHEBI:58359"/>
    </ligand>
</feature>
<feature type="binding site" evidence="1">
    <location>
        <position position="304"/>
    </location>
    <ligand>
        <name>L-glutamine</name>
        <dbReference type="ChEBI" id="CHEBI:58359"/>
    </ligand>
</feature>
<feature type="binding site" evidence="1">
    <location>
        <position position="306"/>
    </location>
    <ligand>
        <name>L-glutamine</name>
        <dbReference type="ChEBI" id="CHEBI:58359"/>
    </ligand>
</feature>
<feature type="binding site" evidence="1">
    <location>
        <position position="307"/>
    </location>
    <ligand>
        <name>L-glutamine</name>
        <dbReference type="ChEBI" id="CHEBI:58359"/>
    </ligand>
</feature>
<name>CARA_SULTO</name>
<evidence type="ECO:0000255" key="1">
    <source>
        <dbReference type="HAMAP-Rule" id="MF_01209"/>
    </source>
</evidence>